<gene>
    <name evidence="1" type="primary">atpC</name>
    <name type="ordered locus">PCC7424_5089</name>
</gene>
<dbReference type="EMBL" id="CP001291">
    <property type="protein sequence ID" value="ACK73440.1"/>
    <property type="molecule type" value="Genomic_DNA"/>
</dbReference>
<dbReference type="RefSeq" id="WP_015957020.1">
    <property type="nucleotide sequence ID" value="NC_011729.1"/>
</dbReference>
<dbReference type="SMR" id="B7KGV3"/>
<dbReference type="STRING" id="65393.PCC7424_5089"/>
<dbReference type="KEGG" id="cyc:PCC7424_5089"/>
<dbReference type="eggNOG" id="COG0355">
    <property type="taxonomic scope" value="Bacteria"/>
</dbReference>
<dbReference type="HOGENOM" id="CLU_084338_1_2_3"/>
<dbReference type="OrthoDB" id="9804110at2"/>
<dbReference type="Proteomes" id="UP000002384">
    <property type="component" value="Chromosome"/>
</dbReference>
<dbReference type="GO" id="GO:0031676">
    <property type="term" value="C:plasma membrane-derived thylakoid membrane"/>
    <property type="evidence" value="ECO:0007669"/>
    <property type="project" value="UniProtKB-SubCell"/>
</dbReference>
<dbReference type="GO" id="GO:0045259">
    <property type="term" value="C:proton-transporting ATP synthase complex"/>
    <property type="evidence" value="ECO:0007669"/>
    <property type="project" value="UniProtKB-KW"/>
</dbReference>
<dbReference type="GO" id="GO:0005524">
    <property type="term" value="F:ATP binding"/>
    <property type="evidence" value="ECO:0007669"/>
    <property type="project" value="UniProtKB-UniRule"/>
</dbReference>
<dbReference type="GO" id="GO:0046933">
    <property type="term" value="F:proton-transporting ATP synthase activity, rotational mechanism"/>
    <property type="evidence" value="ECO:0007669"/>
    <property type="project" value="UniProtKB-UniRule"/>
</dbReference>
<dbReference type="CDD" id="cd12152">
    <property type="entry name" value="F1-ATPase_delta"/>
    <property type="match status" value="1"/>
</dbReference>
<dbReference type="Gene3D" id="2.60.15.10">
    <property type="entry name" value="F0F1 ATP synthase delta/epsilon subunit, N-terminal"/>
    <property type="match status" value="1"/>
</dbReference>
<dbReference type="Gene3D" id="1.10.287.540">
    <property type="entry name" value="Helix hairpin bin"/>
    <property type="match status" value="1"/>
</dbReference>
<dbReference type="HAMAP" id="MF_00530">
    <property type="entry name" value="ATP_synth_epsil_bac"/>
    <property type="match status" value="1"/>
</dbReference>
<dbReference type="InterPro" id="IPR001469">
    <property type="entry name" value="ATP_synth_F1_dsu/esu"/>
</dbReference>
<dbReference type="InterPro" id="IPR020546">
    <property type="entry name" value="ATP_synth_F1_dsu/esu_N"/>
</dbReference>
<dbReference type="InterPro" id="IPR020547">
    <property type="entry name" value="ATP_synth_F1_esu_C"/>
</dbReference>
<dbReference type="InterPro" id="IPR036771">
    <property type="entry name" value="ATPsynth_dsu/esu_N"/>
</dbReference>
<dbReference type="NCBIfam" id="TIGR01216">
    <property type="entry name" value="ATP_synt_epsi"/>
    <property type="match status" value="1"/>
</dbReference>
<dbReference type="PANTHER" id="PTHR13822">
    <property type="entry name" value="ATP SYNTHASE DELTA/EPSILON CHAIN"/>
    <property type="match status" value="1"/>
</dbReference>
<dbReference type="PANTHER" id="PTHR13822:SF10">
    <property type="entry name" value="ATP SYNTHASE EPSILON CHAIN, CHLOROPLASTIC"/>
    <property type="match status" value="1"/>
</dbReference>
<dbReference type="Pfam" id="PF00401">
    <property type="entry name" value="ATP-synt_DE"/>
    <property type="match status" value="1"/>
</dbReference>
<dbReference type="Pfam" id="PF02823">
    <property type="entry name" value="ATP-synt_DE_N"/>
    <property type="match status" value="1"/>
</dbReference>
<dbReference type="SUPFAM" id="SSF51344">
    <property type="entry name" value="Epsilon subunit of F1F0-ATP synthase N-terminal domain"/>
    <property type="match status" value="1"/>
</dbReference>
<accession>B7KGV3</accession>
<feature type="chain" id="PRO_1000127844" description="ATP synthase epsilon chain">
    <location>
        <begin position="1"/>
        <end position="138"/>
    </location>
</feature>
<feature type="region of interest" description="Disordered" evidence="2">
    <location>
        <begin position="89"/>
        <end position="117"/>
    </location>
</feature>
<feature type="compositionally biased region" description="Basic and acidic residues" evidence="2">
    <location>
        <begin position="89"/>
        <end position="114"/>
    </location>
</feature>
<keyword id="KW-0066">ATP synthesis</keyword>
<keyword id="KW-0139">CF(1)</keyword>
<keyword id="KW-0375">Hydrogen ion transport</keyword>
<keyword id="KW-0406">Ion transport</keyword>
<keyword id="KW-0472">Membrane</keyword>
<keyword id="KW-1185">Reference proteome</keyword>
<keyword id="KW-0793">Thylakoid</keyword>
<keyword id="KW-0813">Transport</keyword>
<protein>
    <recommendedName>
        <fullName evidence="1">ATP synthase epsilon chain</fullName>
    </recommendedName>
    <alternativeName>
        <fullName evidence="1">ATP synthase F1 sector epsilon subunit</fullName>
    </alternativeName>
    <alternativeName>
        <fullName evidence="1">F-ATPase epsilon subunit</fullName>
    </alternativeName>
</protein>
<reference key="1">
    <citation type="journal article" date="2011" name="MBio">
        <title>Novel metabolic attributes of the genus Cyanothece, comprising a group of unicellular nitrogen-fixing Cyanobacteria.</title>
        <authorList>
            <person name="Bandyopadhyay A."/>
            <person name="Elvitigala T."/>
            <person name="Welsh E."/>
            <person name="Stockel J."/>
            <person name="Liberton M."/>
            <person name="Min H."/>
            <person name="Sherman L.A."/>
            <person name="Pakrasi H.B."/>
        </authorList>
    </citation>
    <scope>NUCLEOTIDE SEQUENCE [LARGE SCALE GENOMIC DNA]</scope>
    <source>
        <strain>PCC 7424</strain>
    </source>
</reference>
<evidence type="ECO:0000255" key="1">
    <source>
        <dbReference type="HAMAP-Rule" id="MF_00530"/>
    </source>
</evidence>
<evidence type="ECO:0000256" key="2">
    <source>
        <dbReference type="SAM" id="MobiDB-lite"/>
    </source>
</evidence>
<comment type="function">
    <text evidence="1">Produces ATP from ADP in the presence of a proton gradient across the membrane.</text>
</comment>
<comment type="subunit">
    <text evidence="1">F-type ATPases have 2 components, CF(1) - the catalytic core - and CF(0) - the membrane proton channel. CF(1) has five subunits: alpha(3), beta(3), gamma(1), delta(1), epsilon(1). CF(0) has three main subunits: a, b and c.</text>
</comment>
<comment type="subcellular location">
    <subcellularLocation>
        <location evidence="1">Cellular thylakoid membrane</location>
        <topology evidence="1">Peripheral membrane protein</topology>
    </subcellularLocation>
</comment>
<comment type="similarity">
    <text evidence="1">Belongs to the ATPase epsilon chain family.</text>
</comment>
<name>ATPE_GLOC7</name>
<proteinExistence type="inferred from homology"/>
<sequence length="138" mass="15122">MTLSVRIITPDKIVWDDEAEEIILPSTTGQLGILSGHAPLLTALNIGVVRVRPGKDWQTIAVMGGFAEVENNEVKILVNGAEAGAKIDKDTAQQEWNEAQKRLDEASKSGDRQKQIQAEQAWKRARARFQASGGFVQV</sequence>
<organism>
    <name type="scientific">Gloeothece citriformis (strain PCC 7424)</name>
    <name type="common">Cyanothece sp. (strain PCC 7424)</name>
    <dbReference type="NCBI Taxonomy" id="65393"/>
    <lineage>
        <taxon>Bacteria</taxon>
        <taxon>Bacillati</taxon>
        <taxon>Cyanobacteriota</taxon>
        <taxon>Cyanophyceae</taxon>
        <taxon>Oscillatoriophycideae</taxon>
        <taxon>Chroococcales</taxon>
        <taxon>Aphanothecaceae</taxon>
        <taxon>Gloeothece</taxon>
        <taxon>Gloeothece citriformis</taxon>
    </lineage>
</organism>